<comment type="function">
    <text>Produces ATP from ADP in the presence of a proton gradient across the membrane.</text>
</comment>
<comment type="subunit">
    <text evidence="1">F-type ATPases have 2 components, CF(1) - the catalytic core - and CF(0) - the membrane proton channel. CF(1) has five subunits: alpha(3), beta(3), gamma(1), delta(1), epsilon(1). CF(0) has three main subunits: a, b and c.</text>
</comment>
<comment type="interaction">
    <interactant intactId="EBI-544362">
        <id>P0A6E6</id>
    </interactant>
    <interactant intactId="EBI-368707">
        <id>P0ABB0</id>
        <label>atpA</label>
    </interactant>
    <organismsDiffer>false</organismsDiffer>
    <experiments>3</experiments>
</comment>
<comment type="interaction">
    <interactant intactId="EBI-544362">
        <id>P0A6E6</id>
    </interactant>
    <interactant intactId="EBI-544306">
        <id>P0ABA6</id>
        <label>atpG</label>
    </interactant>
    <organismsDiffer>false</organismsDiffer>
    <experiments>5</experiments>
</comment>
<comment type="subcellular location">
    <subcellularLocation>
        <location evidence="1 2">Cell inner membrane</location>
        <topology evidence="1 2">Peripheral membrane protein</topology>
    </subcellularLocation>
</comment>
<comment type="similarity">
    <text evidence="5">Belongs to the ATPase epsilon chain family.</text>
</comment>
<comment type="sequence caution" evidence="5">
    <conflict type="frameshift">
        <sequence resource="EMBL-CDS" id="CAA23528"/>
    </conflict>
</comment>
<evidence type="ECO:0000269" key="1">
    <source>
    </source>
</evidence>
<evidence type="ECO:0000269" key="2">
    <source>
    </source>
</evidence>
<evidence type="ECO:0000269" key="3">
    <source>
    </source>
</evidence>
<evidence type="ECO:0000269" key="4">
    <source ref="9"/>
</evidence>
<evidence type="ECO:0000305" key="5"/>
<evidence type="ECO:0007829" key="6">
    <source>
        <dbReference type="PDB" id="1AQT"/>
    </source>
</evidence>
<evidence type="ECO:0007829" key="7">
    <source>
        <dbReference type="PDB" id="1BSH"/>
    </source>
</evidence>
<evidence type="ECO:0007829" key="8">
    <source>
        <dbReference type="PDB" id="1FS0"/>
    </source>
</evidence>
<feature type="initiator methionine" description="Removed" evidence="3 4">
    <location>
        <position position="1"/>
    </location>
</feature>
<feature type="chain" id="PRO_0000188132" description="ATP synthase epsilon chain">
    <location>
        <begin position="2"/>
        <end position="139"/>
    </location>
</feature>
<feature type="sequence conflict" description="In Ref. 8; AA sequence." evidence="5" ref="8">
    <original>E</original>
    <variation>K</variation>
    <location>
        <position position="13"/>
    </location>
</feature>
<feature type="strand" evidence="8">
    <location>
        <begin position="5"/>
        <end position="13"/>
    </location>
</feature>
<feature type="strand" evidence="8">
    <location>
        <begin position="15"/>
        <end position="35"/>
    </location>
</feature>
<feature type="strand" evidence="8">
    <location>
        <begin position="42"/>
        <end position="46"/>
    </location>
</feature>
<feature type="strand" evidence="8">
    <location>
        <begin position="48"/>
        <end position="55"/>
    </location>
</feature>
<feature type="turn" evidence="6">
    <location>
        <begin position="56"/>
        <end position="58"/>
    </location>
</feature>
<feature type="strand" evidence="8">
    <location>
        <begin position="60"/>
        <end position="65"/>
    </location>
</feature>
<feature type="strand" evidence="8">
    <location>
        <begin position="68"/>
        <end position="72"/>
    </location>
</feature>
<feature type="strand" evidence="8">
    <location>
        <begin position="77"/>
        <end position="81"/>
    </location>
</feature>
<feature type="helix" evidence="8">
    <location>
        <begin position="88"/>
        <end position="103"/>
    </location>
</feature>
<feature type="strand" evidence="6">
    <location>
        <begin position="110"/>
        <end position="112"/>
    </location>
</feature>
<feature type="helix" evidence="8">
    <location>
        <begin position="115"/>
        <end position="133"/>
    </location>
</feature>
<feature type="helix" evidence="7">
    <location>
        <begin position="134"/>
        <end position="137"/>
    </location>
</feature>
<accession>P0A6E6</accession>
<accession>P00832</accession>
<accession>Q2M849</accession>
<proteinExistence type="evidence at protein level"/>
<organism>
    <name type="scientific">Escherichia coli (strain K12)</name>
    <dbReference type="NCBI Taxonomy" id="83333"/>
    <lineage>
        <taxon>Bacteria</taxon>
        <taxon>Pseudomonadati</taxon>
        <taxon>Pseudomonadota</taxon>
        <taxon>Gammaproteobacteria</taxon>
        <taxon>Enterobacterales</taxon>
        <taxon>Enterobacteriaceae</taxon>
        <taxon>Escherichia</taxon>
    </lineage>
</organism>
<keyword id="KW-0002">3D-structure</keyword>
<keyword id="KW-0066">ATP synthesis</keyword>
<keyword id="KW-0997">Cell inner membrane</keyword>
<keyword id="KW-1003">Cell membrane</keyword>
<keyword id="KW-0139">CF(1)</keyword>
<keyword id="KW-0903">Direct protein sequencing</keyword>
<keyword id="KW-0375">Hydrogen ion transport</keyword>
<keyword id="KW-0406">Ion transport</keyword>
<keyword id="KW-0472">Membrane</keyword>
<keyword id="KW-1185">Reference proteome</keyword>
<keyword id="KW-0813">Transport</keyword>
<sequence>MAMTYHLDVVSAEQQMFSGLVEKIQVTGSEGELGIYPGHAPLLTAIKPGMIRIVKQHGHEEFIYLSGGILEVQPGNVTVLADTAIRGQDLDEARAMEAKRKAEEHISSSHGDVDYAQASAELAKAIAQLRVIELTKKAM</sequence>
<protein>
    <recommendedName>
        <fullName>ATP synthase epsilon chain</fullName>
    </recommendedName>
    <alternativeName>
        <fullName>ATP synthase F1 sector epsilon subunit</fullName>
    </alternativeName>
    <alternativeName>
        <fullName>F-ATPase epsilon subunit</fullName>
    </alternativeName>
</protein>
<dbReference type="EMBL" id="J01594">
    <property type="protein sequence ID" value="AAA24738.1"/>
    <property type="molecule type" value="Genomic_DNA"/>
</dbReference>
<dbReference type="EMBL" id="X01631">
    <property type="protein sequence ID" value="CAA25783.1"/>
    <property type="molecule type" value="Genomic_DNA"/>
</dbReference>
<dbReference type="EMBL" id="V00311">
    <property type="protein sequence ID" value="CAA23595.1"/>
    <property type="molecule type" value="Genomic_DNA"/>
</dbReference>
<dbReference type="EMBL" id="M25464">
    <property type="protein sequence ID" value="AAA83876.1"/>
    <property type="molecule type" value="Genomic_DNA"/>
</dbReference>
<dbReference type="EMBL" id="V00267">
    <property type="protein sequence ID" value="CAA23528.1"/>
    <property type="status" value="ALT_FRAME"/>
    <property type="molecule type" value="Genomic_DNA"/>
</dbReference>
<dbReference type="EMBL" id="L10328">
    <property type="protein sequence ID" value="AAA62083.1"/>
    <property type="molecule type" value="Genomic_DNA"/>
</dbReference>
<dbReference type="EMBL" id="U00096">
    <property type="protein sequence ID" value="AAC76754.1"/>
    <property type="molecule type" value="Genomic_DNA"/>
</dbReference>
<dbReference type="EMBL" id="AP009048">
    <property type="protein sequence ID" value="BAE77557.1"/>
    <property type="molecule type" value="Genomic_DNA"/>
</dbReference>
<dbReference type="PIR" id="B90106">
    <property type="entry name" value="PWECE"/>
</dbReference>
<dbReference type="RefSeq" id="NP_418187.1">
    <property type="nucleotide sequence ID" value="NC_000913.3"/>
</dbReference>
<dbReference type="RefSeq" id="WP_001251965.1">
    <property type="nucleotide sequence ID" value="NZ_STEB01000015.1"/>
</dbReference>
<dbReference type="PDB" id="1AQT">
    <property type="method" value="X-ray"/>
    <property type="resolution" value="2.30 A"/>
    <property type="chains" value="A=4-139"/>
</dbReference>
<dbReference type="PDB" id="1BSH">
    <property type="method" value="NMR"/>
    <property type="chains" value="A=2-139"/>
</dbReference>
<dbReference type="PDB" id="1BSN">
    <property type="method" value="NMR"/>
    <property type="chains" value="A=2-139"/>
</dbReference>
<dbReference type="PDB" id="1FS0">
    <property type="method" value="X-ray"/>
    <property type="resolution" value="2.10 A"/>
    <property type="chains" value="E=2-139"/>
</dbReference>
<dbReference type="PDB" id="1QO1">
    <property type="method" value="X-ray"/>
    <property type="resolution" value="3.90 A"/>
    <property type="chains" value="J=4-139"/>
</dbReference>
<dbReference type="PDB" id="3OAA">
    <property type="method" value="X-ray"/>
    <property type="resolution" value="3.26 A"/>
    <property type="chains" value="H/P/X/f=2-139"/>
</dbReference>
<dbReference type="PDB" id="5T4O">
    <property type="method" value="EM"/>
    <property type="resolution" value="6.90 A"/>
    <property type="chains" value="H=1-139"/>
</dbReference>
<dbReference type="PDB" id="5T4P">
    <property type="method" value="EM"/>
    <property type="resolution" value="7.77 A"/>
    <property type="chains" value="H=1-139"/>
</dbReference>
<dbReference type="PDB" id="5T4Q">
    <property type="method" value="EM"/>
    <property type="resolution" value="8.53 A"/>
    <property type="chains" value="H=1-139"/>
</dbReference>
<dbReference type="PDB" id="6OQR">
    <property type="method" value="EM"/>
    <property type="resolution" value="3.10 A"/>
    <property type="chains" value="H=1-139"/>
</dbReference>
<dbReference type="PDB" id="6OQS">
    <property type="method" value="EM"/>
    <property type="resolution" value="3.30 A"/>
    <property type="chains" value="H=1-139"/>
</dbReference>
<dbReference type="PDB" id="6OQT">
    <property type="method" value="EM"/>
    <property type="resolution" value="3.10 A"/>
    <property type="chains" value="H=1-139"/>
</dbReference>
<dbReference type="PDB" id="6OQU">
    <property type="method" value="EM"/>
    <property type="resolution" value="3.20 A"/>
    <property type="chains" value="H=1-139"/>
</dbReference>
<dbReference type="PDB" id="6OQV">
    <property type="method" value="EM"/>
    <property type="resolution" value="3.30 A"/>
    <property type="chains" value="H=1-139"/>
</dbReference>
<dbReference type="PDB" id="6OQW">
    <property type="method" value="EM"/>
    <property type="resolution" value="3.10 A"/>
    <property type="chains" value="H=1-139"/>
</dbReference>
<dbReference type="PDB" id="6PQV">
    <property type="method" value="EM"/>
    <property type="resolution" value="3.30 A"/>
    <property type="chains" value="H=1-139"/>
</dbReference>
<dbReference type="PDB" id="6WNQ">
    <property type="method" value="EM"/>
    <property type="resolution" value="3.40 A"/>
    <property type="chains" value="H=1-139"/>
</dbReference>
<dbReference type="PDB" id="6WNR">
    <property type="method" value="EM"/>
    <property type="resolution" value="3.30 A"/>
    <property type="chains" value="H=1-139"/>
</dbReference>
<dbReference type="PDB" id="8DBP">
    <property type="method" value="EM"/>
    <property type="resolution" value="3.60 A"/>
    <property type="chains" value="H=1-139"/>
</dbReference>
<dbReference type="PDB" id="8DBQ">
    <property type="method" value="EM"/>
    <property type="resolution" value="4.00 A"/>
    <property type="chains" value="H=4-104"/>
</dbReference>
<dbReference type="PDB" id="8DBR">
    <property type="method" value="EM"/>
    <property type="resolution" value="3.20 A"/>
    <property type="chains" value="H=1-139"/>
</dbReference>
<dbReference type="PDB" id="8DBS">
    <property type="method" value="EM"/>
    <property type="resolution" value="3.50 A"/>
    <property type="chains" value="H=4-104"/>
</dbReference>
<dbReference type="PDB" id="8DBT">
    <property type="method" value="EM"/>
    <property type="resolution" value="3.10 A"/>
    <property type="chains" value="H=1-139"/>
</dbReference>
<dbReference type="PDB" id="8DBU">
    <property type="method" value="EM"/>
    <property type="resolution" value="3.40 A"/>
    <property type="chains" value="H=1-139"/>
</dbReference>
<dbReference type="PDB" id="8DBV">
    <property type="method" value="EM"/>
    <property type="resolution" value="3.70 A"/>
    <property type="chains" value="H=1-139"/>
</dbReference>
<dbReference type="PDB" id="8DBW">
    <property type="method" value="EM"/>
    <property type="resolution" value="4.10 A"/>
    <property type="chains" value="H=4-137"/>
</dbReference>
<dbReference type="PDBsum" id="1AQT"/>
<dbReference type="PDBsum" id="1BSH"/>
<dbReference type="PDBsum" id="1BSN"/>
<dbReference type="PDBsum" id="1FS0"/>
<dbReference type="PDBsum" id="1QO1"/>
<dbReference type="PDBsum" id="3OAA"/>
<dbReference type="PDBsum" id="5T4O"/>
<dbReference type="PDBsum" id="5T4P"/>
<dbReference type="PDBsum" id="5T4Q"/>
<dbReference type="PDBsum" id="6OQR"/>
<dbReference type="PDBsum" id="6OQS"/>
<dbReference type="PDBsum" id="6OQT"/>
<dbReference type="PDBsum" id="6OQU"/>
<dbReference type="PDBsum" id="6OQV"/>
<dbReference type="PDBsum" id="6OQW"/>
<dbReference type="PDBsum" id="6PQV"/>
<dbReference type="PDBsum" id="6WNQ"/>
<dbReference type="PDBsum" id="6WNR"/>
<dbReference type="PDBsum" id="8DBP"/>
<dbReference type="PDBsum" id="8DBQ"/>
<dbReference type="PDBsum" id="8DBR"/>
<dbReference type="PDBsum" id="8DBS"/>
<dbReference type="PDBsum" id="8DBT"/>
<dbReference type="PDBsum" id="8DBU"/>
<dbReference type="PDBsum" id="8DBV"/>
<dbReference type="PDBsum" id="8DBW"/>
<dbReference type="SMR" id="P0A6E6"/>
<dbReference type="BioGRID" id="4261177">
    <property type="interactions" value="70"/>
</dbReference>
<dbReference type="BioGRID" id="852547">
    <property type="interactions" value="4"/>
</dbReference>
<dbReference type="ComplexPortal" id="CPX-4022">
    <property type="entry name" value="ATP synthase complex"/>
</dbReference>
<dbReference type="DIP" id="DIP-47828N"/>
<dbReference type="FunCoup" id="P0A6E6">
    <property type="interactions" value="558"/>
</dbReference>
<dbReference type="IntAct" id="P0A6E6">
    <property type="interactions" value="7"/>
</dbReference>
<dbReference type="STRING" id="511145.b3731"/>
<dbReference type="TCDB" id="3.A.2.1.1">
    <property type="family name" value="the h+- or na+-translocating f-type, v-type and a-type atpase (f-atpase) superfamily"/>
</dbReference>
<dbReference type="jPOST" id="P0A6E6"/>
<dbReference type="PaxDb" id="511145-b3731"/>
<dbReference type="EnsemblBacteria" id="AAC76754">
    <property type="protein sequence ID" value="AAC76754"/>
    <property type="gene ID" value="b3731"/>
</dbReference>
<dbReference type="GeneID" id="948245"/>
<dbReference type="KEGG" id="ecj:JW3709"/>
<dbReference type="KEGG" id="eco:b3731"/>
<dbReference type="KEGG" id="ecoc:C3026_20220"/>
<dbReference type="PATRIC" id="fig|1411691.4.peg.2969"/>
<dbReference type="EchoBASE" id="EB0098"/>
<dbReference type="eggNOG" id="COG0355">
    <property type="taxonomic scope" value="Bacteria"/>
</dbReference>
<dbReference type="HOGENOM" id="CLU_084338_2_0_6"/>
<dbReference type="InParanoid" id="P0A6E6"/>
<dbReference type="OMA" id="EERLYQG"/>
<dbReference type="OrthoDB" id="9791445at2"/>
<dbReference type="PhylomeDB" id="P0A6E6"/>
<dbReference type="BioCyc" id="EcoCyc:ATPC-MONOMER"/>
<dbReference type="BioCyc" id="MetaCyc:ATPC-MONOMER"/>
<dbReference type="BRENDA" id="7.1.2.2">
    <property type="organism ID" value="2026"/>
</dbReference>
<dbReference type="EvolutionaryTrace" id="P0A6E6"/>
<dbReference type="PRO" id="PR:P0A6E6"/>
<dbReference type="Proteomes" id="UP000000625">
    <property type="component" value="Chromosome"/>
</dbReference>
<dbReference type="GO" id="GO:0005886">
    <property type="term" value="C:plasma membrane"/>
    <property type="evidence" value="ECO:0000303"/>
    <property type="project" value="ComplexPortal"/>
</dbReference>
<dbReference type="GO" id="GO:0045259">
    <property type="term" value="C:proton-transporting ATP synthase complex"/>
    <property type="evidence" value="ECO:0000353"/>
    <property type="project" value="ComplexPortal"/>
</dbReference>
<dbReference type="GO" id="GO:0005524">
    <property type="term" value="F:ATP binding"/>
    <property type="evidence" value="ECO:0007669"/>
    <property type="project" value="UniProtKB-UniRule"/>
</dbReference>
<dbReference type="GO" id="GO:0046933">
    <property type="term" value="F:proton-transporting ATP synthase activity, rotational mechanism"/>
    <property type="evidence" value="ECO:0000314"/>
    <property type="project" value="EcoCyc"/>
</dbReference>
<dbReference type="GO" id="GO:0015986">
    <property type="term" value="P:proton motive force-driven ATP synthesis"/>
    <property type="evidence" value="ECO:0000318"/>
    <property type="project" value="GO_Central"/>
</dbReference>
<dbReference type="GO" id="GO:0042777">
    <property type="term" value="P:proton motive force-driven plasma membrane ATP synthesis"/>
    <property type="evidence" value="ECO:0000315"/>
    <property type="project" value="ComplexPortal"/>
</dbReference>
<dbReference type="CDD" id="cd12152">
    <property type="entry name" value="F1-ATPase_delta"/>
    <property type="match status" value="1"/>
</dbReference>
<dbReference type="FunFam" id="1.20.5.440:FF:000001">
    <property type="entry name" value="ATP synthase epsilon chain"/>
    <property type="match status" value="1"/>
</dbReference>
<dbReference type="FunFam" id="2.60.15.10:FF:000001">
    <property type="entry name" value="ATP synthase epsilon chain"/>
    <property type="match status" value="1"/>
</dbReference>
<dbReference type="Gene3D" id="1.20.5.440">
    <property type="entry name" value="ATP synthase delta/epsilon subunit, C-terminal domain"/>
    <property type="match status" value="1"/>
</dbReference>
<dbReference type="Gene3D" id="2.60.15.10">
    <property type="entry name" value="F0F1 ATP synthase delta/epsilon subunit, N-terminal"/>
    <property type="match status" value="1"/>
</dbReference>
<dbReference type="HAMAP" id="MF_00530">
    <property type="entry name" value="ATP_synth_epsil_bac"/>
    <property type="match status" value="1"/>
</dbReference>
<dbReference type="InterPro" id="IPR036794">
    <property type="entry name" value="ATP_F1_dsu/esu_C_sf"/>
</dbReference>
<dbReference type="InterPro" id="IPR001469">
    <property type="entry name" value="ATP_synth_F1_dsu/esu"/>
</dbReference>
<dbReference type="InterPro" id="IPR020546">
    <property type="entry name" value="ATP_synth_F1_dsu/esu_N"/>
</dbReference>
<dbReference type="InterPro" id="IPR020547">
    <property type="entry name" value="ATP_synth_F1_esu_C"/>
</dbReference>
<dbReference type="InterPro" id="IPR036771">
    <property type="entry name" value="ATPsynth_dsu/esu_N"/>
</dbReference>
<dbReference type="NCBIfam" id="TIGR01216">
    <property type="entry name" value="ATP_synt_epsi"/>
    <property type="match status" value="1"/>
</dbReference>
<dbReference type="NCBIfam" id="NF001847">
    <property type="entry name" value="PRK00571.1-4"/>
    <property type="match status" value="1"/>
</dbReference>
<dbReference type="PANTHER" id="PTHR13822">
    <property type="entry name" value="ATP SYNTHASE DELTA/EPSILON CHAIN"/>
    <property type="match status" value="1"/>
</dbReference>
<dbReference type="PANTHER" id="PTHR13822:SF10">
    <property type="entry name" value="ATP SYNTHASE EPSILON CHAIN, CHLOROPLASTIC"/>
    <property type="match status" value="1"/>
</dbReference>
<dbReference type="Pfam" id="PF00401">
    <property type="entry name" value="ATP-synt_DE"/>
    <property type="match status" value="1"/>
</dbReference>
<dbReference type="Pfam" id="PF02823">
    <property type="entry name" value="ATP-synt_DE_N"/>
    <property type="match status" value="1"/>
</dbReference>
<dbReference type="SUPFAM" id="SSF46604">
    <property type="entry name" value="Epsilon subunit of F1F0-ATP synthase C-terminal domain"/>
    <property type="match status" value="1"/>
</dbReference>
<dbReference type="SUPFAM" id="SSF51344">
    <property type="entry name" value="Epsilon subunit of F1F0-ATP synthase N-terminal domain"/>
    <property type="match status" value="1"/>
</dbReference>
<name>ATPE_ECOLI</name>
<reference key="1">
    <citation type="journal article" date="1984" name="Biochem. J.">
        <title>DNA sequence around the Escherichia coli unc operon. Completion of the sequence of a 17 kilobase segment containing asnA, oriC, unc, glmS and phoS.</title>
        <authorList>
            <person name="Walker J.E."/>
            <person name="Gay N.J."/>
            <person name="Saraste M."/>
            <person name="Eberle A.N."/>
        </authorList>
    </citation>
    <scope>NUCLEOTIDE SEQUENCE [GENOMIC DNA]</scope>
</reference>
<reference key="2">
    <citation type="journal article" date="1982" name="Biochem. Biophys. Res. Commun.">
        <title>Nucleotide sequence of the genes for beta and epsilon subunits of proton-translocating ATPase from Escherichia coli.</title>
        <authorList>
            <person name="Kanazawa H."/>
            <person name="Kayano T."/>
            <person name="Kiyasu T."/>
            <person name="Futai M."/>
        </authorList>
    </citation>
    <scope>NUCLEOTIDE SEQUENCE [GENOMIC DNA]</scope>
</reference>
<reference key="3">
    <citation type="journal article" date="1982" name="Ann. N. Y. Acad. Sci.">
        <title>Structure and function of H+-ATPase: what we have learned from Escherichia coli H+-ATPase.</title>
        <authorList>
            <person name="Kanazawa H."/>
            <person name="Futai M."/>
        </authorList>
    </citation>
    <scope>NUCLEOTIDE SEQUENCE [GENOMIC DNA]</scope>
</reference>
<reference key="4">
    <citation type="journal article" date="1981" name="Nucleic Acids Res.">
        <title>The atp operon: nucleotide sequence of the genes for the gamma, beta, and epsilon subunits of Escherichia coli ATP synthase.</title>
        <authorList>
            <person name="Saraste M."/>
            <person name="Gay N.J."/>
            <person name="Eberle A."/>
            <person name="Runswick M.J."/>
            <person name="Walker J.E."/>
        </authorList>
    </citation>
    <scope>NUCLEOTIDE SEQUENCE [GENOMIC DNA]</scope>
</reference>
<reference key="5">
    <citation type="journal article" date="1993" name="Genomics">
        <title>DNA sequence and analysis of 136 kilobases of the Escherichia coli genome: organizational symmetry around the origin of replication.</title>
        <authorList>
            <person name="Burland V.D."/>
            <person name="Plunkett G. III"/>
            <person name="Daniels D.L."/>
            <person name="Blattner F.R."/>
        </authorList>
    </citation>
    <scope>NUCLEOTIDE SEQUENCE [LARGE SCALE GENOMIC DNA]</scope>
    <source>
        <strain>K12 / MG1655 / ATCC 47076</strain>
    </source>
</reference>
<reference key="6">
    <citation type="journal article" date="1997" name="Science">
        <title>The complete genome sequence of Escherichia coli K-12.</title>
        <authorList>
            <person name="Blattner F.R."/>
            <person name="Plunkett G. III"/>
            <person name="Bloch C.A."/>
            <person name="Perna N.T."/>
            <person name="Burland V."/>
            <person name="Riley M."/>
            <person name="Collado-Vides J."/>
            <person name="Glasner J.D."/>
            <person name="Rode C.K."/>
            <person name="Mayhew G.F."/>
            <person name="Gregor J."/>
            <person name="Davis N.W."/>
            <person name="Kirkpatrick H.A."/>
            <person name="Goeden M.A."/>
            <person name="Rose D.J."/>
            <person name="Mau B."/>
            <person name="Shao Y."/>
        </authorList>
    </citation>
    <scope>NUCLEOTIDE SEQUENCE [LARGE SCALE GENOMIC DNA]</scope>
    <source>
        <strain>K12 / MG1655 / ATCC 47076</strain>
    </source>
</reference>
<reference key="7">
    <citation type="journal article" date="2006" name="Mol. Syst. Biol.">
        <title>Highly accurate genome sequences of Escherichia coli K-12 strains MG1655 and W3110.</title>
        <authorList>
            <person name="Hayashi K."/>
            <person name="Morooka N."/>
            <person name="Yamamoto Y."/>
            <person name="Fujita K."/>
            <person name="Isono K."/>
            <person name="Choi S."/>
            <person name="Ohtsubo E."/>
            <person name="Baba T."/>
            <person name="Wanner B.L."/>
            <person name="Mori H."/>
            <person name="Horiuchi T."/>
        </authorList>
    </citation>
    <scope>NUCLEOTIDE SEQUENCE [LARGE SCALE GENOMIC DNA]</scope>
    <source>
        <strain>K12 / W3110 / ATCC 27325 / DSM 5911</strain>
    </source>
</reference>
<reference key="8">
    <citation type="journal article" date="1998" name="FEMS Microbiol. Lett.">
        <title>Small genes/gene-products in Escherichia coli K-12.</title>
        <authorList>
            <person name="Wasinger V.C."/>
            <person name="Humphery-Smith I."/>
        </authorList>
    </citation>
    <scope>PROTEIN SEQUENCE OF 2-21</scope>
    <source>
        <strain>K12</strain>
    </source>
</reference>
<reference key="9">
    <citation type="submission" date="1996-02" db="UniProtKB">
        <authorList>
            <person name="Frutiger S."/>
            <person name="Hughes G.J."/>
            <person name="Pasquali C."/>
            <person name="Hochstrasser D.F."/>
        </authorList>
    </citation>
    <scope>PROTEIN SEQUENCE OF 2-9</scope>
    <source>
        <strain>K12 / W3110 / ATCC 27325 / DSM 5911</strain>
    </source>
</reference>
<reference key="10">
    <citation type="journal article" date="2005" name="J. Biol. Chem.">
        <title>Protein complexes of the Escherichia coli cell envelope.</title>
        <authorList>
            <person name="Stenberg F."/>
            <person name="Chovanec P."/>
            <person name="Maslen S.L."/>
            <person name="Robinson C.V."/>
            <person name="Ilag L."/>
            <person name="von Heijne G."/>
            <person name="Daley D.O."/>
        </authorList>
    </citation>
    <scope>SUBUNIT</scope>
    <scope>SUBCELLULAR LOCATION</scope>
    <source>
        <strain>BL21-DE3</strain>
    </source>
</reference>
<reference key="11">
    <citation type="journal article" date="2011" name="J. Biol. Chem.">
        <title>Membrane localization of small proteins in Escherichia coli.</title>
        <authorList>
            <person name="Fontaine F."/>
            <person name="Fuchs R.T."/>
            <person name="Storz G."/>
        </authorList>
    </citation>
    <scope>SUBCELLULAR LOCATION</scope>
    <source>
        <strain>K12 / MG1655 / ATCC 47076</strain>
    </source>
</reference>
<reference key="12">
    <citation type="journal article" date="1995" name="Nat. Struct. Biol.">
        <title>Structural features of the epsilon subunit of the Escherichia coli ATP synthase determined by NMR spectroscopy.</title>
        <authorList>
            <person name="Wilkens S."/>
            <person name="Dahlquist F.W."/>
            <person name="McIntosh L.P."/>
            <person name="Donaldson L.W."/>
            <person name="Capaldi R.A."/>
        </authorList>
    </citation>
    <scope>STRUCTURE BY NMR</scope>
</reference>
<reference key="13">
    <citation type="journal article" date="1998" name="J. Biol. Chem.">
        <title>Solution structure of the epsilon subunit of the F1-ATPase from Escherichia coli and interactions of this subunit with beta subunits in the complex.</title>
        <authorList>
            <person name="Wilkens S."/>
            <person name="Capaldi R.A."/>
        </authorList>
    </citation>
    <scope>STRUCTURE BY NMR</scope>
</reference>
<reference key="14">
    <citation type="journal article" date="1997" name="Structure">
        <title>Crystal structure of the epsilon subunit of the proton-translocating ATP synthase from Escherichia coli.</title>
        <authorList>
            <person name="Uhlin U."/>
            <person name="Cox G.B."/>
            <person name="Guss J.M."/>
        </authorList>
    </citation>
    <scope>X-RAY CRYSTALLOGRAPHY (2.3 ANGSTROMS)</scope>
</reference>
<gene>
    <name type="primary">atpC</name>
    <name type="synonym">papG</name>
    <name type="synonym">uncC</name>
    <name type="ordered locus">b3731</name>
    <name type="ordered locus">JW3709</name>
</gene>